<name>DPOLB_RAT</name>
<gene>
    <name type="primary">Polb</name>
</gene>
<keyword id="KW-0002">3D-structure</keyword>
<keyword id="KW-0007">Acetylation</keyword>
<keyword id="KW-0963">Cytoplasm</keyword>
<keyword id="KW-0903">Direct protein sequencing</keyword>
<keyword id="KW-0227">DNA damage</keyword>
<keyword id="KW-0234">DNA repair</keyword>
<keyword id="KW-0235">DNA replication</keyword>
<keyword id="KW-0237">DNA synthesis</keyword>
<keyword id="KW-0238">DNA-binding</keyword>
<keyword id="KW-0239">DNA-directed DNA polymerase</keyword>
<keyword id="KW-1017">Isopeptide bond</keyword>
<keyword id="KW-0456">Lyase</keyword>
<keyword id="KW-0460">Magnesium</keyword>
<keyword id="KW-0479">Metal-binding</keyword>
<keyword id="KW-0488">Methylation</keyword>
<keyword id="KW-0548">Nucleotidyltransferase</keyword>
<keyword id="KW-0539">Nucleus</keyword>
<keyword id="KW-0630">Potassium</keyword>
<keyword id="KW-1185">Reference proteome</keyword>
<keyword id="KW-0915">Sodium</keyword>
<keyword id="KW-0808">Transferase</keyword>
<keyword id="KW-0832">Ubl conjugation</keyword>
<reference key="1">
    <citation type="journal article" date="1987" name="J. Biol. Chem.">
        <title>Homology between mammalian DNA polymerase beta and terminal deoxynucleotidyltransferase.</title>
        <authorList>
            <person name="Matsukage A."/>
            <person name="Nishikawa K."/>
            <person name="Ooi T."/>
            <person name="Seto Y."/>
            <person name="Yamaguchi M."/>
        </authorList>
    </citation>
    <scope>NUCLEOTIDE SEQUENCE [MRNA]</scope>
</reference>
<reference key="2">
    <citation type="submission" date="1995-10" db="EMBL/GenBank/DDBJ databases">
        <authorList>
            <person name="Konopinski R."/>
            <person name="Nowak R."/>
            <person name="Siedlecki J.A."/>
        </authorList>
    </citation>
    <scope>NUCLEOTIDE SEQUENCE [MRNA]</scope>
    <source>
        <strain>Wistar</strain>
    </source>
</reference>
<reference key="3">
    <citation type="journal article" date="2004" name="Genome Res.">
        <title>The status, quality, and expansion of the NIH full-length cDNA project: the Mammalian Gene Collection (MGC).</title>
        <authorList>
            <consortium name="The MGC Project Team"/>
        </authorList>
    </citation>
    <scope>NUCLEOTIDE SEQUENCE [LARGE SCALE MRNA]</scope>
    <source>
        <tissue>Thymus</tissue>
    </source>
</reference>
<reference key="4">
    <citation type="journal article" date="1986" name="Proc. Natl. Acad. Sci. U.S.A.">
        <title>Structure of rat DNA polymerase beta revealed by partial amino acid sequencing and cDNA cloning.</title>
        <authorList>
            <person name="Zmudzka B.Z."/>
            <person name="Sengupta D."/>
            <person name="Matsukage A."/>
            <person name="Cobianchi F."/>
            <person name="Kumar P."/>
            <person name="Wilson S.H."/>
        </authorList>
    </citation>
    <scope>NUCLEOTIDE SEQUENCE [MRNA] OF 18-335</scope>
</reference>
<reference key="5">
    <citation type="journal article" date="1990" name="J. Biol. Chem.">
        <title>Studies of the domain structure of mammalian DNA polymerase beta. Identification of a discrete template binding domain.</title>
        <authorList>
            <person name="Kumar P."/>
            <person name="Widen S.G."/>
            <person name="Williams K.R."/>
            <person name="Kedar P."/>
            <person name="Karpel R.L."/>
            <person name="Wilson S.H."/>
        </authorList>
    </citation>
    <scope>PARTIAL PROTEIN SEQUENCE</scope>
    <scope>SEQUENCE REVISION TO 228</scope>
</reference>
<reference key="6">
    <citation type="journal article" date="1990" name="Biochemistry">
        <title>Site-directed mutagenesis of recombinant rat DNA polymerase beta: involvement of arginine-183 in primer recognition.</title>
        <authorList>
            <person name="Date T."/>
            <person name="Yamamoto S."/>
            <person name="Tanihara K."/>
            <person name="Nishimoto Y."/>
            <person name="Liu N."/>
            <person name="Matsukage A."/>
        </authorList>
    </citation>
    <scope>IMPORTANCE OF ARG-183 IN PRIMER BINDING</scope>
</reference>
<reference key="7">
    <citation type="journal article" date="1991" name="Biochemistry">
        <title>Aspartic acid residues at positions 190 and 192 of rat DNA polymerase beta are involved in primer binding.</title>
        <authorList>
            <person name="Date T."/>
            <person name="Yamamoto S."/>
            <person name="Tanihara K."/>
            <person name="Nishimoto Y."/>
            <person name="Matsukage A."/>
        </authorList>
    </citation>
    <scope>MUTAGENESIS OF ASP-190 AND ASP-192</scope>
    <scope>IMPORTANCE OF ASP-190 AND ASP-192 IN PRIMER BINDING</scope>
</reference>
<reference key="8">
    <citation type="journal article" date="1992" name="Biochemistry">
        <title>Mammalian DNA polymerase beta: characterization of a 16-kDa transdomain fragment containing the nucleic acid-binding activities of the native enzyme.</title>
        <authorList>
            <person name="Casas-Finet J.R."/>
            <person name="Kumar A."/>
            <person name="Karpel R.L."/>
            <person name="Wilson S.H."/>
        </authorList>
    </citation>
    <scope>DNA-BINDING REGION</scope>
</reference>
<reference key="9">
    <citation type="journal article" date="2004" name="J. Biol. Chem.">
        <title>The D246V mutant of DNA polymerase beta misincorporates nucleotides: evidence for a role for the flexible loop in DNA positioning within the active site.</title>
        <authorList>
            <person name="Dalal S."/>
            <person name="Kosa J.L."/>
            <person name="Sweasy J.B."/>
        </authorList>
    </citation>
    <scope>MUTAGENESIS OF ASP-246</scope>
    <scope>IMPORTANCE OF ASP-246 IN FIDELITY</scope>
</reference>
<reference key="10">
    <citation type="journal article" date="1994" name="Cell">
        <title>2.3-A crystal structure of the catalytic domain of DNA polymerase beta.</title>
        <authorList>
            <person name="Davies J.F. II"/>
            <person name="Almassy R.J."/>
            <person name="Hostomska Z."/>
            <person name="Ferre R.A."/>
            <person name="Hostomsky Z."/>
        </authorList>
    </citation>
    <scope>X-RAY CRYSTALLOGRAPHY (2.3 ANGSTROMS)</scope>
</reference>
<reference key="11">
    <citation type="journal article" date="1994" name="Science">
        <title>Crystal structure of rat DNA polymerase beta: evidence for a common polymerase mechanism.</title>
        <authorList>
            <person name="Sawaya M.R."/>
            <person name="Pelletier H."/>
            <person name="Kumar A."/>
            <person name="Wilson S.H."/>
            <person name="Kraut J."/>
        </authorList>
    </citation>
    <scope>X-RAY CRYSTALLOGRAPHY (2.3 ANGSTROMS)</scope>
</reference>
<reference key="12">
    <citation type="journal article" date="1996" name="Biochemistry">
        <title>Characterization of the metal ion binding helix-hairpin-helix motifs in human DNA polymerase beta by X-ray structural analysis.</title>
        <authorList>
            <person name="Pelletier H."/>
            <person name="Sawaya M.R."/>
        </authorList>
    </citation>
    <scope>X-RAY CRYSTALLOGRAPHY (2.7 ANGSTROMS)</scope>
</reference>
<reference key="13">
    <citation type="journal article" date="2001" name="Biochemistry">
        <title>Insight into the catalytic mechanism of DNA polymerase beta: structures of intermediate complexes.</title>
        <authorList>
            <person name="Arndt J.W."/>
            <person name="Gong W."/>
            <person name="Zhong X."/>
            <person name="Showalter A.K."/>
            <person name="Liu J."/>
            <person name="Dunlap C.A."/>
            <person name="Lin Z."/>
            <person name="Paxson C."/>
            <person name="Tsai M.-D."/>
            <person name="Chan M.K."/>
        </authorList>
    </citation>
    <scope>X-RAY CRYSTALLOGRAPHY (2.6 ANGSTROMS)</scope>
</reference>
<reference key="14">
    <citation type="journal article" date="1996" name="Biochemistry">
        <title>Three-dimensional solution structure of the N-terminal domain of DNA polymerase beta and mapping of the ssDNA interaction interface.</title>
        <authorList>
            <person name="Liu D."/>
            <person name="Prasad R."/>
            <person name="Wilson S.H."/>
            <person name="DeRose E.F."/>
            <person name="Mullen G.P."/>
        </authorList>
    </citation>
    <scope>STRUCTURE BY NMR OF 1-87</scope>
</reference>
<reference key="15">
    <citation type="journal article" date="2000" name="J. Mol. Biol.">
        <title>Backbone dynamics and refined solution structure of the N-terminal domain of DNA polymerase beta. Correlation with DNA binding and dRP lyase activity.</title>
        <authorList>
            <person name="Maciejewski M.W."/>
            <person name="Liu D."/>
            <person name="Prasad R."/>
            <person name="Wilson S.H."/>
            <person name="Mullen G.P."/>
        </authorList>
    </citation>
    <scope>STRUCTURE BY NMR OF 1-87</scope>
</reference>
<organism>
    <name type="scientific">Rattus norvegicus</name>
    <name type="common">Rat</name>
    <dbReference type="NCBI Taxonomy" id="10116"/>
    <lineage>
        <taxon>Eukaryota</taxon>
        <taxon>Metazoa</taxon>
        <taxon>Chordata</taxon>
        <taxon>Craniata</taxon>
        <taxon>Vertebrata</taxon>
        <taxon>Euteleostomi</taxon>
        <taxon>Mammalia</taxon>
        <taxon>Eutheria</taxon>
        <taxon>Euarchontoglires</taxon>
        <taxon>Glires</taxon>
        <taxon>Rodentia</taxon>
        <taxon>Myomorpha</taxon>
        <taxon>Muroidea</taxon>
        <taxon>Muridae</taxon>
        <taxon>Murinae</taxon>
        <taxon>Rattus</taxon>
    </lineage>
</organism>
<feature type="chain" id="PRO_0000218780" description="DNA polymerase beta">
    <location>
        <begin position="1"/>
        <end position="335"/>
    </location>
</feature>
<feature type="region of interest" description="DNA-binding" evidence="2">
    <location>
        <begin position="183"/>
        <end position="192"/>
    </location>
</feature>
<feature type="active site" description="Nucleophile; Schiff-base intermediate with DNA; for 5'-dRP lyase activity" evidence="2">
    <location>
        <position position="72"/>
    </location>
</feature>
<feature type="binding site" evidence="2">
    <location>
        <position position="60"/>
    </location>
    <ligand>
        <name>K(+)</name>
        <dbReference type="ChEBI" id="CHEBI:29103"/>
        <label>1</label>
    </ligand>
</feature>
<feature type="binding site" evidence="2">
    <location>
        <position position="60"/>
    </location>
    <ligand>
        <name>Na(+)</name>
        <dbReference type="ChEBI" id="CHEBI:29101"/>
        <label>1</label>
    </ligand>
</feature>
<feature type="binding site" evidence="2">
    <location>
        <position position="62"/>
    </location>
    <ligand>
        <name>K(+)</name>
        <dbReference type="ChEBI" id="CHEBI:29103"/>
        <label>1</label>
    </ligand>
</feature>
<feature type="binding site" evidence="2">
    <location>
        <position position="62"/>
    </location>
    <ligand>
        <name>Na(+)</name>
        <dbReference type="ChEBI" id="CHEBI:29101"/>
        <label>1</label>
    </ligand>
</feature>
<feature type="binding site" evidence="2">
    <location>
        <position position="65"/>
    </location>
    <ligand>
        <name>K(+)</name>
        <dbReference type="ChEBI" id="CHEBI:29103"/>
        <label>1</label>
    </ligand>
</feature>
<feature type="binding site" evidence="2">
    <location>
        <position position="65"/>
    </location>
    <ligand>
        <name>Na(+)</name>
        <dbReference type="ChEBI" id="CHEBI:29101"/>
        <label>1</label>
    </ligand>
</feature>
<feature type="binding site" evidence="2">
    <location>
        <position position="101"/>
    </location>
    <ligand>
        <name>K(+)</name>
        <dbReference type="ChEBI" id="CHEBI:29103"/>
        <label>2</label>
    </ligand>
</feature>
<feature type="binding site" evidence="2">
    <location>
        <position position="101"/>
    </location>
    <ligand>
        <name>Na(+)</name>
        <dbReference type="ChEBI" id="CHEBI:29101"/>
        <label>2</label>
    </ligand>
</feature>
<feature type="binding site" evidence="2">
    <location>
        <position position="103"/>
    </location>
    <ligand>
        <name>K(+)</name>
        <dbReference type="ChEBI" id="CHEBI:29103"/>
        <label>2</label>
    </ligand>
</feature>
<feature type="binding site" evidence="2">
    <location>
        <position position="103"/>
    </location>
    <ligand>
        <name>Na(+)</name>
        <dbReference type="ChEBI" id="CHEBI:29101"/>
        <label>2</label>
    </ligand>
</feature>
<feature type="binding site" evidence="2">
    <location>
        <position position="106"/>
    </location>
    <ligand>
        <name>K(+)</name>
        <dbReference type="ChEBI" id="CHEBI:29103"/>
        <label>2</label>
    </ligand>
</feature>
<feature type="binding site" evidence="2">
    <location>
        <position position="106"/>
    </location>
    <ligand>
        <name>Na(+)</name>
        <dbReference type="ChEBI" id="CHEBI:29101"/>
        <label>2</label>
    </ligand>
</feature>
<feature type="binding site" evidence="2">
    <location>
        <position position="149"/>
    </location>
    <ligand>
        <name>a 2'-deoxyribonucleoside 5'-triphosphate</name>
        <dbReference type="ChEBI" id="CHEBI:61560"/>
    </ligand>
</feature>
<feature type="binding site" evidence="2">
    <location>
        <position position="180"/>
    </location>
    <ligand>
        <name>a 2'-deoxyribonucleoside 5'-triphosphate</name>
        <dbReference type="ChEBI" id="CHEBI:61560"/>
    </ligand>
</feature>
<feature type="binding site" evidence="2">
    <location>
        <position position="183"/>
    </location>
    <ligand>
        <name>a 2'-deoxyribonucleoside 5'-triphosphate</name>
        <dbReference type="ChEBI" id="CHEBI:61560"/>
    </ligand>
</feature>
<feature type="binding site" evidence="2">
    <location>
        <position position="189"/>
    </location>
    <ligand>
        <name>a 2'-deoxyribonucleoside 5'-triphosphate</name>
        <dbReference type="ChEBI" id="CHEBI:61560"/>
    </ligand>
</feature>
<feature type="binding site" evidence="2">
    <location>
        <position position="190"/>
    </location>
    <ligand>
        <name>a 2'-deoxyribonucleoside 5'-triphosphate</name>
        <dbReference type="ChEBI" id="CHEBI:61560"/>
    </ligand>
</feature>
<feature type="binding site" evidence="2">
    <location>
        <position position="190"/>
    </location>
    <ligand>
        <name>Mg(2+)</name>
        <dbReference type="ChEBI" id="CHEBI:18420"/>
        <label>1</label>
    </ligand>
</feature>
<feature type="binding site" evidence="2">
    <location>
        <position position="190"/>
    </location>
    <ligand>
        <name>Mg(2+)</name>
        <dbReference type="ChEBI" id="CHEBI:18420"/>
        <label>2</label>
    </ligand>
</feature>
<feature type="binding site" evidence="2">
    <location>
        <position position="192"/>
    </location>
    <ligand>
        <name>Mg(2+)</name>
        <dbReference type="ChEBI" id="CHEBI:18420"/>
        <label>1</label>
    </ligand>
</feature>
<feature type="binding site" evidence="2">
    <location>
        <position position="192"/>
    </location>
    <ligand>
        <name>Mg(2+)</name>
        <dbReference type="ChEBI" id="CHEBI:18420"/>
        <label>2</label>
    </ligand>
</feature>
<feature type="binding site" evidence="2">
    <location>
        <position position="256"/>
    </location>
    <ligand>
        <name>Mg(2+)</name>
        <dbReference type="ChEBI" id="CHEBI:18420"/>
        <label>2</label>
    </ligand>
</feature>
<feature type="modified residue" description="N6-acetyllysine" evidence="3">
    <location>
        <position position="72"/>
    </location>
</feature>
<feature type="modified residue" description="Omega-N-methylarginine; by PRMT6" evidence="2">
    <location>
        <position position="83"/>
    </location>
</feature>
<feature type="modified residue" description="Omega-N-methylarginine; by PRMT6" evidence="2">
    <location>
        <position position="152"/>
    </location>
</feature>
<feature type="cross-link" description="Glycyl lysine isopeptide (Lys-Gly) (interchain with G-Cter in ubiquitin)" evidence="2">
    <location>
        <position position="41"/>
    </location>
</feature>
<feature type="cross-link" description="Glycyl lysine isopeptide (Lys-Gly) (interchain with G-Cter in ubiquitin)" evidence="2">
    <location>
        <position position="61"/>
    </location>
</feature>
<feature type="cross-link" description="Glycyl lysine isopeptide (Lys-Gly) (interchain with G-Cter in ubiquitin)" evidence="2">
    <location>
        <position position="81"/>
    </location>
</feature>
<feature type="mutagenesis site" description="Loss of activity." evidence="5">
    <original>D</original>
    <variation>E</variation>
    <variation>S</variation>
    <location>
        <position position="190"/>
    </location>
</feature>
<feature type="mutagenesis site" description="No loss of activity.">
    <original>M</original>
    <variation>I</variation>
    <location>
        <position position="191"/>
    </location>
</feature>
<feature type="mutagenesis site" description="50% loss of activity.">
    <original>M</original>
    <variation>T</variation>
    <location>
        <position position="191"/>
    </location>
</feature>
<feature type="mutagenesis site" description="Loss of activity." evidence="5">
    <original>D</original>
    <variation>E</variation>
    <variation>S</variation>
    <location>
        <position position="192"/>
    </location>
</feature>
<feature type="mutagenesis site" description="Misincorporates T nucleotide opposite G/C template." evidence="4">
    <original>D</original>
    <variation>V</variation>
    <location>
        <position position="246"/>
    </location>
</feature>
<feature type="sequence conflict" description="In Ref. 1; AAA41901, 2; AAB00389 and 4; AAA41900." evidence="6" ref="1 2 4">
    <original>L</original>
    <variation>R</variation>
    <location>
        <position position="228"/>
    </location>
</feature>
<feature type="helix" evidence="10">
    <location>
        <begin position="13"/>
        <end position="28"/>
    </location>
</feature>
<feature type="strand" evidence="8">
    <location>
        <begin position="29"/>
        <end position="31"/>
    </location>
</feature>
<feature type="helix" evidence="10">
    <location>
        <begin position="33"/>
        <end position="48"/>
    </location>
</feature>
<feature type="helix" evidence="10">
    <location>
        <begin position="56"/>
        <end position="61"/>
    </location>
</feature>
<feature type="strand" evidence="12">
    <location>
        <begin position="62"/>
        <end position="64"/>
    </location>
</feature>
<feature type="helix" evidence="10">
    <location>
        <begin position="67"/>
        <end position="76"/>
    </location>
</feature>
<feature type="strand" evidence="10">
    <location>
        <begin position="79"/>
        <end position="81"/>
    </location>
</feature>
<feature type="helix" evidence="10">
    <location>
        <begin position="83"/>
        <end position="90"/>
    </location>
</feature>
<feature type="helix" evidence="9">
    <location>
        <begin position="92"/>
        <end position="100"/>
    </location>
</feature>
<feature type="turn" evidence="12">
    <location>
        <begin position="101"/>
        <end position="104"/>
    </location>
</feature>
<feature type="helix" evidence="9">
    <location>
        <begin position="108"/>
        <end position="115"/>
    </location>
</feature>
<feature type="turn" evidence="9">
    <location>
        <begin position="116"/>
        <end position="118"/>
    </location>
</feature>
<feature type="helix" evidence="9">
    <location>
        <begin position="122"/>
        <end position="126"/>
    </location>
</feature>
<feature type="helix" evidence="9">
    <location>
        <begin position="129"/>
        <end position="131"/>
    </location>
</feature>
<feature type="helix" evidence="9">
    <location>
        <begin position="134"/>
        <end position="141"/>
    </location>
</feature>
<feature type="turn" evidence="9">
    <location>
        <begin position="142"/>
        <end position="144"/>
    </location>
</feature>
<feature type="helix" evidence="9">
    <location>
        <begin position="145"/>
        <end position="147"/>
    </location>
</feature>
<feature type="helix" evidence="9">
    <location>
        <begin position="152"/>
        <end position="169"/>
    </location>
</feature>
<feature type="strand" evidence="9">
    <location>
        <begin position="174"/>
        <end position="177"/>
    </location>
</feature>
<feature type="helix" evidence="9">
    <location>
        <begin position="179"/>
        <end position="182"/>
    </location>
</feature>
<feature type="strand" evidence="9">
    <location>
        <begin position="186"/>
        <end position="196"/>
    </location>
</feature>
<feature type="turn" evidence="7">
    <location>
        <begin position="202"/>
        <end position="204"/>
    </location>
</feature>
<feature type="helix" evidence="9">
    <location>
        <begin position="208"/>
        <end position="220"/>
    </location>
</feature>
<feature type="strand" evidence="9">
    <location>
        <begin position="224"/>
        <end position="230"/>
    </location>
</feature>
<feature type="strand" evidence="9">
    <location>
        <begin position="232"/>
        <end position="239"/>
    </location>
</feature>
<feature type="strand" evidence="11">
    <location>
        <begin position="244"/>
        <end position="247"/>
    </location>
</feature>
<feature type="strand" evidence="9">
    <location>
        <begin position="253"/>
        <end position="259"/>
    </location>
</feature>
<feature type="helix" evidence="9">
    <location>
        <begin position="262"/>
        <end position="264"/>
    </location>
</feature>
<feature type="helix" evidence="9">
    <location>
        <begin position="265"/>
        <end position="273"/>
    </location>
</feature>
<feature type="helix" evidence="9">
    <location>
        <begin position="276"/>
        <end position="288"/>
    </location>
</feature>
<feature type="strand" evidence="9">
    <location>
        <begin position="291"/>
        <end position="293"/>
    </location>
</feature>
<feature type="strand" evidence="9">
    <location>
        <begin position="298"/>
        <end position="301"/>
    </location>
</feature>
<feature type="strand" evidence="10">
    <location>
        <begin position="303"/>
        <end position="305"/>
    </location>
</feature>
<feature type="helix" evidence="9">
    <location>
        <begin position="316"/>
        <end position="322"/>
    </location>
</feature>
<feature type="helix" evidence="9">
    <location>
        <begin position="330"/>
        <end position="332"/>
    </location>
</feature>
<protein>
    <recommendedName>
        <fullName evidence="2">DNA polymerase beta</fullName>
        <ecNumber evidence="2">2.7.7.7</ecNumber>
    </recommendedName>
    <alternativeName>
        <fullName evidence="2">5'-deoxyribose-phosphate lyase</fullName>
        <shortName evidence="2">5'-dRP lyase</shortName>
        <ecNumber evidence="2">4.2.99.-</ecNumber>
    </alternativeName>
    <alternativeName>
        <fullName evidence="2">AP lyase</fullName>
        <ecNumber evidence="2">4.2.99.18</ecNumber>
    </alternativeName>
</protein>
<sequence>MSKRKAPQETLNGGITDMLVELANFEKNVSQAIHKYNAYRKAASVIAKYPHKIKSGAEAKKLPGVGTKIAEKIDEFLATGKLRKLEKIRQDDTSSSINFLTRVTGIGPSAARKLVDEGIKTLEDLRKNEDKLNHHQRIGLKYFEDFEKRIPREEMLQMQDIVLNEVKKLDPEYIATVCGSFRRGAESSGDMDVLLTHPNFTSESSKQPKLLHRVVEQLQKVRFITDTLSKGETKFMGVCQLPSENDENEYPHRRIDIRLIPKDQYYCGVLYFTGSDIFNKNMRAHALEKGFTINEYTIRPLGVTGVAGEPLPVDSEQDIFDYIQWRYREPKDRSE</sequence>
<comment type="function">
    <text evidence="2">Repair polymerase that plays a key role in base-excision repair. During this process, the damaged base is excised by specific DNA glycosylases, the DNA backbone is nicked at the abasic site by an apurinic/apyrimidic (AP) endonuclease, and POLB removes 5'-deoxyribose-phosphate from the preincised AP site acting as a 5'-deoxyribose-phosphate lyase (5'-dRP lyase); through its DNA polymerase activity, it adds one nucleotide to the 3' end of the arising single-nucleotide gap. Conducts 'gap-filling' DNA synthesis in a stepwise distributive fashion rather than in a processive fashion as for other DNA polymerases. It is also able to cleave sugar-phosphate bonds 3' to an intact AP site, acting as an AP lyase.</text>
</comment>
<comment type="catalytic activity">
    <reaction evidence="2">
        <text>DNA(n) + a 2'-deoxyribonucleoside 5'-triphosphate = DNA(n+1) + diphosphate</text>
        <dbReference type="Rhea" id="RHEA:22508"/>
        <dbReference type="Rhea" id="RHEA-COMP:17339"/>
        <dbReference type="Rhea" id="RHEA-COMP:17340"/>
        <dbReference type="ChEBI" id="CHEBI:33019"/>
        <dbReference type="ChEBI" id="CHEBI:61560"/>
        <dbReference type="ChEBI" id="CHEBI:173112"/>
        <dbReference type="EC" id="2.7.7.7"/>
    </reaction>
</comment>
<comment type="catalytic activity">
    <reaction evidence="2">
        <text>a 5'-end 2'-deoxyribose-2'-deoxyribonucleotide-DNA = (2E,4S)-4-hydroxypenten-2-al-5-phosphate + a 5'-end 5'-phospho-2'-deoxyribonucleoside-DNA + H(+)</text>
        <dbReference type="Rhea" id="RHEA:76255"/>
        <dbReference type="Rhea" id="RHEA-COMP:13180"/>
        <dbReference type="Rhea" id="RHEA-COMP:18657"/>
        <dbReference type="ChEBI" id="CHEBI:15378"/>
        <dbReference type="ChEBI" id="CHEBI:136412"/>
        <dbReference type="ChEBI" id="CHEBI:195194"/>
        <dbReference type="ChEBI" id="CHEBI:195195"/>
    </reaction>
</comment>
<comment type="catalytic activity">
    <reaction evidence="2">
        <text>2'-deoxyribonucleotide-(2'-deoxyribose 5'-phosphate)-2'-deoxyribonucleotide-DNA = a 3'-end 2'-deoxyribonucleotide-(2,3-dehydro-2,3-deoxyribose 5'-phosphate)-DNA + a 5'-end 5'-phospho-2'-deoxyribonucleoside-DNA + H(+)</text>
        <dbReference type="Rhea" id="RHEA:66592"/>
        <dbReference type="Rhea" id="RHEA-COMP:13180"/>
        <dbReference type="Rhea" id="RHEA-COMP:16897"/>
        <dbReference type="Rhea" id="RHEA-COMP:17067"/>
        <dbReference type="ChEBI" id="CHEBI:15378"/>
        <dbReference type="ChEBI" id="CHEBI:136412"/>
        <dbReference type="ChEBI" id="CHEBI:157695"/>
        <dbReference type="ChEBI" id="CHEBI:167181"/>
        <dbReference type="EC" id="4.2.99.18"/>
    </reaction>
</comment>
<comment type="cofactor">
    <cofactor evidence="2">
        <name>Mg(2+)</name>
        <dbReference type="ChEBI" id="CHEBI:18420"/>
    </cofactor>
    <text evidence="2">Binds 2 magnesium ions per subunit.</text>
</comment>
<comment type="subunit">
    <text evidence="2">Monomer (By similarity). Binds single-stranded DNA (ssDNA) (By similarity). Interacts with APEX1, LIG1, LIG3, FEN1, PCNA and XRCC1 (By similarity). Interacts with HUWE1/ARF-BP1, STUB1/CHIP and USP47 (By similarity). Interacts with FAM168A (By similarity).</text>
</comment>
<comment type="interaction">
    <interactant intactId="EBI-15845002">
        <id>P06766</id>
    </interactant>
    <interactant intactId="EBI-947466">
        <id>P18887</id>
        <label>XRCC1</label>
    </interactant>
    <organismsDiffer>true</organismsDiffer>
    <experiments>4</experiments>
</comment>
<comment type="subcellular location">
    <subcellularLocation>
        <location evidence="2">Nucleus</location>
    </subcellularLocation>
    <subcellularLocation>
        <location evidence="2">Cytoplasm</location>
    </subcellularLocation>
    <text evidence="2">Cytoplasmic in normal conditions. Translocates to the nucleus following DNA damage.</text>
</comment>
<comment type="domain">
    <text>Residues 239-252 form a flexible loop which appears to affect the polymerase fidelity.</text>
</comment>
<comment type="PTM">
    <text evidence="1">Methylation by PRMT6 stimulates the polymerase activity by enhancing DNA binding and processivity.</text>
</comment>
<comment type="PTM">
    <text evidence="1">Ubiquitinated at Lys-41, Lys-61 and Lys-81: monoubiquitinated by HUWE1/ARF-BP1. Monoubiquitinated protein is then the target of STUB1/CHIP, which catalyzes polyubiquitination from monoubiquitin, leading to degradation by the proteasome. USP47 mediates the deubiquitination of monoubiquitinated protein, preventing polyubiquitination by STUB1/CHIP and its subsequent degradation (By similarity).</text>
</comment>
<comment type="similarity">
    <text evidence="6">Belongs to the DNA polymerase type-X family.</text>
</comment>
<evidence type="ECO:0000250" key="1"/>
<evidence type="ECO:0000250" key="2">
    <source>
        <dbReference type="UniProtKB" id="P06746"/>
    </source>
</evidence>
<evidence type="ECO:0000250" key="3">
    <source>
        <dbReference type="UniProtKB" id="Q8K409"/>
    </source>
</evidence>
<evidence type="ECO:0000269" key="4">
    <source>
    </source>
</evidence>
<evidence type="ECO:0000269" key="5">
    <source>
    </source>
</evidence>
<evidence type="ECO:0000305" key="6"/>
<evidence type="ECO:0007829" key="7">
    <source>
        <dbReference type="PDB" id="1BPB"/>
    </source>
</evidence>
<evidence type="ECO:0007829" key="8">
    <source>
        <dbReference type="PDB" id="1DK2"/>
    </source>
</evidence>
<evidence type="ECO:0007829" key="9">
    <source>
        <dbReference type="PDB" id="2VAN"/>
    </source>
</evidence>
<evidence type="ECO:0007829" key="10">
    <source>
        <dbReference type="PDB" id="3UXO"/>
    </source>
</evidence>
<evidence type="ECO:0007829" key="11">
    <source>
        <dbReference type="PDB" id="3V7J"/>
    </source>
</evidence>
<evidence type="ECO:0007829" key="12">
    <source>
        <dbReference type="PDB" id="3V7L"/>
    </source>
</evidence>
<proteinExistence type="evidence at protein level"/>
<dbReference type="EC" id="2.7.7.7" evidence="2"/>
<dbReference type="EC" id="4.2.99.-" evidence="2"/>
<dbReference type="EC" id="4.2.99.18" evidence="2"/>
<dbReference type="EMBL" id="J02776">
    <property type="protein sequence ID" value="AAA41901.1"/>
    <property type="molecule type" value="mRNA"/>
</dbReference>
<dbReference type="EMBL" id="U38801">
    <property type="protein sequence ID" value="AAB00389.1"/>
    <property type="molecule type" value="mRNA"/>
</dbReference>
<dbReference type="EMBL" id="BC098668">
    <property type="protein sequence ID" value="AAH98668.1"/>
    <property type="molecule type" value="mRNA"/>
</dbReference>
<dbReference type="EMBL" id="M13961">
    <property type="protein sequence ID" value="AAA41900.1"/>
    <property type="molecule type" value="mRNA"/>
</dbReference>
<dbReference type="PIR" id="A27112">
    <property type="entry name" value="A27112"/>
</dbReference>
<dbReference type="RefSeq" id="NP_058837.2">
    <property type="nucleotide sequence ID" value="NM_017141.2"/>
</dbReference>
<dbReference type="PDB" id="1BNO">
    <property type="method" value="NMR"/>
    <property type="chains" value="A=1-87"/>
</dbReference>
<dbReference type="PDB" id="1BNP">
    <property type="method" value="NMR"/>
    <property type="chains" value="A=1-87"/>
</dbReference>
<dbReference type="PDB" id="1BPB">
    <property type="method" value="X-ray"/>
    <property type="resolution" value="2.30 A"/>
    <property type="chains" value="A=88-335"/>
</dbReference>
<dbReference type="PDB" id="1BPD">
    <property type="method" value="X-ray"/>
    <property type="resolution" value="3.60 A"/>
    <property type="chains" value="A=1-335"/>
</dbReference>
<dbReference type="PDB" id="1BPE">
    <property type="method" value="X-ray"/>
    <property type="resolution" value="2.90 A"/>
    <property type="chains" value="A=1-335"/>
</dbReference>
<dbReference type="PDB" id="1DK2">
    <property type="method" value="NMR"/>
    <property type="chains" value="A=2-87"/>
</dbReference>
<dbReference type="PDB" id="1DK3">
    <property type="method" value="NMR"/>
    <property type="chains" value="A=1-87"/>
</dbReference>
<dbReference type="PDB" id="1HUO">
    <property type="method" value="X-ray"/>
    <property type="resolution" value="2.60 A"/>
    <property type="chains" value="A/B=1-335"/>
</dbReference>
<dbReference type="PDB" id="1HUZ">
    <property type="method" value="X-ray"/>
    <property type="resolution" value="2.60 A"/>
    <property type="chains" value="A/B=1-335"/>
</dbReference>
<dbReference type="PDB" id="1JN3">
    <property type="method" value="X-ray"/>
    <property type="resolution" value="2.35 A"/>
    <property type="chains" value="A=85-335"/>
</dbReference>
<dbReference type="PDB" id="1NOM">
    <property type="method" value="X-ray"/>
    <property type="resolution" value="3.00 A"/>
    <property type="chains" value="A=88-335"/>
</dbReference>
<dbReference type="PDB" id="1RPL">
    <property type="method" value="X-ray"/>
    <property type="resolution" value="2.30 A"/>
    <property type="chains" value="A=85-335"/>
</dbReference>
<dbReference type="PDB" id="1ZQU">
    <property type="method" value="X-ray"/>
    <property type="resolution" value="2.60 A"/>
    <property type="chains" value="A=88-335"/>
</dbReference>
<dbReference type="PDB" id="1ZQV">
    <property type="method" value="X-ray"/>
    <property type="resolution" value="2.70 A"/>
    <property type="chains" value="A=88-335"/>
</dbReference>
<dbReference type="PDB" id="1ZQW">
    <property type="method" value="X-ray"/>
    <property type="resolution" value="2.30 A"/>
    <property type="chains" value="A=88-335"/>
</dbReference>
<dbReference type="PDB" id="1ZQX">
    <property type="method" value="X-ray"/>
    <property type="resolution" value="2.50 A"/>
    <property type="chains" value="A=88-335"/>
</dbReference>
<dbReference type="PDB" id="1ZQY">
    <property type="method" value="X-ray"/>
    <property type="resolution" value="2.30 A"/>
    <property type="chains" value="A=88-335"/>
</dbReference>
<dbReference type="PDB" id="1ZQZ">
    <property type="method" value="X-ray"/>
    <property type="resolution" value="2.70 A"/>
    <property type="chains" value="A=88-335"/>
</dbReference>
<dbReference type="PDB" id="2BPC">
    <property type="method" value="X-ray"/>
    <property type="resolution" value="2.80 A"/>
    <property type="chains" value="A=88-335"/>
</dbReference>
<dbReference type="PDB" id="2BPF">
    <property type="method" value="X-ray"/>
    <property type="resolution" value="2.90 A"/>
    <property type="chains" value="A=1-335"/>
</dbReference>
<dbReference type="PDB" id="2BPG">
    <property type="method" value="X-ray"/>
    <property type="resolution" value="3.60 A"/>
    <property type="chains" value="A/B=1-335"/>
</dbReference>
<dbReference type="PDB" id="2VAN">
    <property type="method" value="X-ray"/>
    <property type="resolution" value="2.10 A"/>
    <property type="chains" value="A=91-335"/>
</dbReference>
<dbReference type="PDB" id="3K75">
    <property type="method" value="X-ray"/>
    <property type="resolution" value="2.95 A"/>
    <property type="chains" value="D/E=91-335"/>
</dbReference>
<dbReference type="PDB" id="3LQC">
    <property type="method" value="X-ray"/>
    <property type="resolution" value="2.35 A"/>
    <property type="chains" value="B=142-335"/>
</dbReference>
<dbReference type="PDB" id="3UXN">
    <property type="method" value="X-ray"/>
    <property type="resolution" value="2.50 A"/>
    <property type="chains" value="A/B=1-335"/>
</dbReference>
<dbReference type="PDB" id="3UXO">
    <property type="method" value="X-ray"/>
    <property type="resolution" value="2.10 A"/>
    <property type="chains" value="A/B=1-335"/>
</dbReference>
<dbReference type="PDB" id="3UXP">
    <property type="method" value="X-ray"/>
    <property type="resolution" value="2.72 A"/>
    <property type="chains" value="A/B=1-335"/>
</dbReference>
<dbReference type="PDB" id="3V72">
    <property type="method" value="X-ray"/>
    <property type="resolution" value="2.49 A"/>
    <property type="chains" value="A=1-335"/>
</dbReference>
<dbReference type="PDB" id="3V7J">
    <property type="method" value="X-ray"/>
    <property type="resolution" value="2.25 A"/>
    <property type="chains" value="A=4-335"/>
</dbReference>
<dbReference type="PDB" id="3V7K">
    <property type="method" value="X-ray"/>
    <property type="resolution" value="2.27 A"/>
    <property type="chains" value="A=4-335"/>
</dbReference>
<dbReference type="PDB" id="3V7L">
    <property type="method" value="X-ray"/>
    <property type="resolution" value="2.66 A"/>
    <property type="chains" value="A=4-335"/>
</dbReference>
<dbReference type="PDBsum" id="1BNO"/>
<dbReference type="PDBsum" id="1BNP"/>
<dbReference type="PDBsum" id="1BPB"/>
<dbReference type="PDBsum" id="1BPD"/>
<dbReference type="PDBsum" id="1BPE"/>
<dbReference type="PDBsum" id="1DK2"/>
<dbReference type="PDBsum" id="1DK3"/>
<dbReference type="PDBsum" id="1HUO"/>
<dbReference type="PDBsum" id="1HUZ"/>
<dbReference type="PDBsum" id="1JN3"/>
<dbReference type="PDBsum" id="1NOM"/>
<dbReference type="PDBsum" id="1RPL"/>
<dbReference type="PDBsum" id="1ZQU"/>
<dbReference type="PDBsum" id="1ZQV"/>
<dbReference type="PDBsum" id="1ZQW"/>
<dbReference type="PDBsum" id="1ZQX"/>
<dbReference type="PDBsum" id="1ZQY"/>
<dbReference type="PDBsum" id="1ZQZ"/>
<dbReference type="PDBsum" id="2BPC"/>
<dbReference type="PDBsum" id="2BPF"/>
<dbReference type="PDBsum" id="2BPG"/>
<dbReference type="PDBsum" id="2VAN"/>
<dbReference type="PDBsum" id="3K75"/>
<dbReference type="PDBsum" id="3LQC"/>
<dbReference type="PDBsum" id="3UXN"/>
<dbReference type="PDBsum" id="3UXO"/>
<dbReference type="PDBsum" id="3UXP"/>
<dbReference type="PDBsum" id="3V72"/>
<dbReference type="PDBsum" id="3V7J"/>
<dbReference type="PDBsum" id="3V7K"/>
<dbReference type="PDBsum" id="3V7L"/>
<dbReference type="BMRB" id="P06766"/>
<dbReference type="SMR" id="P06766"/>
<dbReference type="DIP" id="DIP-44707N"/>
<dbReference type="FunCoup" id="P06766">
    <property type="interactions" value="1250"/>
</dbReference>
<dbReference type="IntAct" id="P06766">
    <property type="interactions" value="1"/>
</dbReference>
<dbReference type="STRING" id="10116.ENSRNOP00000026039"/>
<dbReference type="BindingDB" id="P06766"/>
<dbReference type="ChEMBL" id="CHEMBL4343"/>
<dbReference type="GlyGen" id="P06766">
    <property type="glycosylation" value="1 site"/>
</dbReference>
<dbReference type="iPTMnet" id="P06766"/>
<dbReference type="PhosphoSitePlus" id="P06766"/>
<dbReference type="jPOST" id="P06766"/>
<dbReference type="PaxDb" id="10116-ENSRNOP00000026039"/>
<dbReference type="Ensembl" id="ENSRNOT00000113772.1">
    <property type="protein sequence ID" value="ENSRNOP00000094599.1"/>
    <property type="gene ID" value="ENSRNOG00000019150.6"/>
</dbReference>
<dbReference type="GeneID" id="29240"/>
<dbReference type="KEGG" id="rno:29240"/>
<dbReference type="UCSC" id="RGD:3363">
    <property type="organism name" value="rat"/>
</dbReference>
<dbReference type="AGR" id="RGD:3363"/>
<dbReference type="CTD" id="5423"/>
<dbReference type="RGD" id="3363">
    <property type="gene designation" value="Polb"/>
</dbReference>
<dbReference type="eggNOG" id="KOG2534">
    <property type="taxonomic scope" value="Eukaryota"/>
</dbReference>
<dbReference type="GeneTree" id="ENSGT00940000156918"/>
<dbReference type="HOGENOM" id="CLU_008698_1_0_1"/>
<dbReference type="InParanoid" id="P06766"/>
<dbReference type="OMA" id="ERDVFDW"/>
<dbReference type="OrthoDB" id="205514at2759"/>
<dbReference type="PhylomeDB" id="P06766"/>
<dbReference type="TreeFam" id="TF103002"/>
<dbReference type="Reactome" id="R-RNO-110362">
    <property type="pathway name" value="POLB-Dependent Long Patch Base Excision Repair"/>
</dbReference>
<dbReference type="Reactome" id="R-RNO-110373">
    <property type="pathway name" value="Resolution of AP sites via the multiple-nucleotide patch replacement pathway"/>
</dbReference>
<dbReference type="Reactome" id="R-RNO-110381">
    <property type="pathway name" value="Resolution of AP sites via the single-nucleotide replacement pathway"/>
</dbReference>
<dbReference type="Reactome" id="R-RNO-5649702">
    <property type="pathway name" value="APEX1-Independent Resolution of AP Sites via the Single Nucleotide Replacement Pathway"/>
</dbReference>
<dbReference type="Reactome" id="R-RNO-5651801">
    <property type="pathway name" value="PCNA-Dependent Long Patch Base Excision Repair"/>
</dbReference>
<dbReference type="Reactome" id="R-RNO-5689880">
    <property type="pathway name" value="Ub-specific processing proteases"/>
</dbReference>
<dbReference type="Reactome" id="R-RNO-73930">
    <property type="pathway name" value="Abasic sugar-phosphate removal via the single-nucleotide replacement pathway"/>
</dbReference>
<dbReference type="EvolutionaryTrace" id="P06766"/>
<dbReference type="PRO" id="PR:P06766"/>
<dbReference type="Proteomes" id="UP000002494">
    <property type="component" value="Chromosome 16"/>
</dbReference>
<dbReference type="Bgee" id="ENSRNOG00000019150">
    <property type="expression patterns" value="Expressed in testis and 20 other cell types or tissues"/>
</dbReference>
<dbReference type="GO" id="GO:0005737">
    <property type="term" value="C:cytoplasm"/>
    <property type="evidence" value="ECO:0000250"/>
    <property type="project" value="UniProtKB"/>
</dbReference>
<dbReference type="GO" id="GO:0005874">
    <property type="term" value="C:microtubule"/>
    <property type="evidence" value="ECO:0000266"/>
    <property type="project" value="RGD"/>
</dbReference>
<dbReference type="GO" id="GO:0005634">
    <property type="term" value="C:nucleus"/>
    <property type="evidence" value="ECO:0000266"/>
    <property type="project" value="RGD"/>
</dbReference>
<dbReference type="GO" id="GO:0032991">
    <property type="term" value="C:protein-containing complex"/>
    <property type="evidence" value="ECO:0000266"/>
    <property type="project" value="RGD"/>
</dbReference>
<dbReference type="GO" id="GO:0005876">
    <property type="term" value="C:spindle microtubule"/>
    <property type="evidence" value="ECO:0000266"/>
    <property type="project" value="RGD"/>
</dbReference>
<dbReference type="GO" id="GO:0051575">
    <property type="term" value="F:5'-deoxyribose-5-phosphate lyase activity"/>
    <property type="evidence" value="ECO:0000266"/>
    <property type="project" value="RGD"/>
</dbReference>
<dbReference type="GO" id="GO:0140078">
    <property type="term" value="F:class I DNA-(apurinic or apyrimidinic site) endonuclease activity"/>
    <property type="evidence" value="ECO:0000266"/>
    <property type="project" value="RGD"/>
</dbReference>
<dbReference type="GO" id="GO:0003684">
    <property type="term" value="F:damaged DNA binding"/>
    <property type="evidence" value="ECO:0000314"/>
    <property type="project" value="RGD"/>
</dbReference>
<dbReference type="GO" id="GO:0003677">
    <property type="term" value="F:DNA binding"/>
    <property type="evidence" value="ECO:0000314"/>
    <property type="project" value="UniProtKB"/>
</dbReference>
<dbReference type="GO" id="GO:0003887">
    <property type="term" value="F:DNA-directed DNA polymerase activity"/>
    <property type="evidence" value="ECO:0000314"/>
    <property type="project" value="RGD"/>
</dbReference>
<dbReference type="GO" id="GO:0019899">
    <property type="term" value="F:enzyme binding"/>
    <property type="evidence" value="ECO:0000266"/>
    <property type="project" value="RGD"/>
</dbReference>
<dbReference type="GO" id="GO:0016829">
    <property type="term" value="F:lyase activity"/>
    <property type="evidence" value="ECO:0000250"/>
    <property type="project" value="UniProtKB"/>
</dbReference>
<dbReference type="GO" id="GO:0046872">
    <property type="term" value="F:metal ion binding"/>
    <property type="evidence" value="ECO:0000314"/>
    <property type="project" value="UniProtKB"/>
</dbReference>
<dbReference type="GO" id="GO:0008017">
    <property type="term" value="F:microtubule binding"/>
    <property type="evidence" value="ECO:0000266"/>
    <property type="project" value="RGD"/>
</dbReference>
<dbReference type="GO" id="GO:0006915">
    <property type="term" value="P:apoptotic process"/>
    <property type="evidence" value="ECO:0000266"/>
    <property type="project" value="RGD"/>
</dbReference>
<dbReference type="GO" id="GO:0006284">
    <property type="term" value="P:base-excision repair"/>
    <property type="evidence" value="ECO:0000250"/>
    <property type="project" value="UniProtKB"/>
</dbReference>
<dbReference type="GO" id="GO:0006287">
    <property type="term" value="P:base-excision repair, gap-filling"/>
    <property type="evidence" value="ECO:0000266"/>
    <property type="project" value="RGD"/>
</dbReference>
<dbReference type="GO" id="GO:0006974">
    <property type="term" value="P:DNA damage response"/>
    <property type="evidence" value="ECO:0000250"/>
    <property type="project" value="UniProtKB"/>
</dbReference>
<dbReference type="GO" id="GO:0006260">
    <property type="term" value="P:DNA replication"/>
    <property type="evidence" value="ECO:0007669"/>
    <property type="project" value="UniProtKB-KW"/>
</dbReference>
<dbReference type="GO" id="GO:0006303">
    <property type="term" value="P:double-strand break repair via nonhomologous end joining"/>
    <property type="evidence" value="ECO:0000318"/>
    <property type="project" value="GO_Central"/>
</dbReference>
<dbReference type="GO" id="GO:0048872">
    <property type="term" value="P:homeostasis of number of cells"/>
    <property type="evidence" value="ECO:0000266"/>
    <property type="project" value="RGD"/>
</dbReference>
<dbReference type="GO" id="GO:0071707">
    <property type="term" value="P:immunoglobulin heavy chain V-D-J recombination"/>
    <property type="evidence" value="ECO:0000266"/>
    <property type="project" value="RGD"/>
</dbReference>
<dbReference type="GO" id="GO:0001701">
    <property type="term" value="P:in utero embryonic development"/>
    <property type="evidence" value="ECO:0000266"/>
    <property type="project" value="RGD"/>
</dbReference>
<dbReference type="GO" id="GO:0006954">
    <property type="term" value="P:inflammatory response"/>
    <property type="evidence" value="ECO:0000266"/>
    <property type="project" value="RGD"/>
</dbReference>
<dbReference type="GO" id="GO:0008630">
    <property type="term" value="P:intrinsic apoptotic signaling pathway in response to DNA damage"/>
    <property type="evidence" value="ECO:0000266"/>
    <property type="project" value="RGD"/>
</dbReference>
<dbReference type="GO" id="GO:0048535">
    <property type="term" value="P:lymph node development"/>
    <property type="evidence" value="ECO:0000266"/>
    <property type="project" value="RGD"/>
</dbReference>
<dbReference type="GO" id="GO:0051402">
    <property type="term" value="P:neuron apoptotic process"/>
    <property type="evidence" value="ECO:0000266"/>
    <property type="project" value="RGD"/>
</dbReference>
<dbReference type="GO" id="GO:0006290">
    <property type="term" value="P:pyrimidine dimer repair"/>
    <property type="evidence" value="ECO:0000314"/>
    <property type="project" value="RGD"/>
</dbReference>
<dbReference type="GO" id="GO:0045471">
    <property type="term" value="P:response to ethanol"/>
    <property type="evidence" value="ECO:0000270"/>
    <property type="project" value="RGD"/>
</dbReference>
<dbReference type="GO" id="GO:0010332">
    <property type="term" value="P:response to gamma radiation"/>
    <property type="evidence" value="ECO:0000270"/>
    <property type="project" value="RGD"/>
</dbReference>
<dbReference type="GO" id="GO:0055093">
    <property type="term" value="P:response to hyperoxia"/>
    <property type="evidence" value="ECO:0000270"/>
    <property type="project" value="RGD"/>
</dbReference>
<dbReference type="GO" id="GO:0007435">
    <property type="term" value="P:salivary gland morphogenesis"/>
    <property type="evidence" value="ECO:0000266"/>
    <property type="project" value="RGD"/>
</dbReference>
<dbReference type="GO" id="GO:0016445">
    <property type="term" value="P:somatic diversification of immunoglobulins"/>
    <property type="evidence" value="ECO:0000266"/>
    <property type="project" value="RGD"/>
</dbReference>
<dbReference type="GO" id="GO:0016446">
    <property type="term" value="P:somatic hypermutation of immunoglobulin genes"/>
    <property type="evidence" value="ECO:0000266"/>
    <property type="project" value="RGD"/>
</dbReference>
<dbReference type="GO" id="GO:0048536">
    <property type="term" value="P:spleen development"/>
    <property type="evidence" value="ECO:0000266"/>
    <property type="project" value="RGD"/>
</dbReference>
<dbReference type="CDD" id="cd00141">
    <property type="entry name" value="NT_POLXc"/>
    <property type="match status" value="1"/>
</dbReference>
<dbReference type="FunFam" id="1.10.150.110:FF:000002">
    <property type="entry name" value="DNA polymerase beta"/>
    <property type="match status" value="1"/>
</dbReference>
<dbReference type="FunFam" id="1.10.150.20:FF:000026">
    <property type="entry name" value="DNA polymerase beta"/>
    <property type="match status" value="1"/>
</dbReference>
<dbReference type="FunFam" id="3.30.210.10:FF:000008">
    <property type="entry name" value="DNA polymerase beta"/>
    <property type="match status" value="1"/>
</dbReference>
<dbReference type="FunFam" id="3.30.460.10:FF:000021">
    <property type="entry name" value="DNA polymerase beta"/>
    <property type="match status" value="1"/>
</dbReference>
<dbReference type="Gene3D" id="1.10.150.20">
    <property type="entry name" value="5' to 3' exonuclease, C-terminal subdomain"/>
    <property type="match status" value="1"/>
</dbReference>
<dbReference type="Gene3D" id="3.30.460.10">
    <property type="entry name" value="Beta Polymerase, domain 2"/>
    <property type="match status" value="1"/>
</dbReference>
<dbReference type="Gene3D" id="1.10.150.110">
    <property type="entry name" value="DNA polymerase beta, N-terminal domain-like"/>
    <property type="match status" value="1"/>
</dbReference>
<dbReference type="Gene3D" id="3.30.210.10">
    <property type="entry name" value="DNA polymerase, thumb domain"/>
    <property type="match status" value="1"/>
</dbReference>
<dbReference type="InterPro" id="IPR002054">
    <property type="entry name" value="DNA-dir_DNA_pol_X"/>
</dbReference>
<dbReference type="InterPro" id="IPR019843">
    <property type="entry name" value="DNA_pol-X_BS"/>
</dbReference>
<dbReference type="InterPro" id="IPR010996">
    <property type="entry name" value="DNA_pol_b-like_N"/>
</dbReference>
<dbReference type="InterPro" id="IPR028207">
    <property type="entry name" value="DNA_pol_B_palm_palm"/>
</dbReference>
<dbReference type="InterPro" id="IPR018944">
    <property type="entry name" value="DNA_pol_lambd_fingers_domain"/>
</dbReference>
<dbReference type="InterPro" id="IPR027421">
    <property type="entry name" value="DNA_pol_lamdba_lyase_dom_sf"/>
</dbReference>
<dbReference type="InterPro" id="IPR037160">
    <property type="entry name" value="DNA_Pol_thumb_sf"/>
</dbReference>
<dbReference type="InterPro" id="IPR022312">
    <property type="entry name" value="DNA_pol_X"/>
</dbReference>
<dbReference type="InterPro" id="IPR002008">
    <property type="entry name" value="DNA_pol_X_beta-like"/>
</dbReference>
<dbReference type="InterPro" id="IPR003583">
    <property type="entry name" value="Hlx-hairpin-Hlx_DNA-bd_motif"/>
</dbReference>
<dbReference type="InterPro" id="IPR043519">
    <property type="entry name" value="NT_sf"/>
</dbReference>
<dbReference type="InterPro" id="IPR029398">
    <property type="entry name" value="PolB_thumb"/>
</dbReference>
<dbReference type="PANTHER" id="PTHR11276:SF42">
    <property type="entry name" value="DNA POLYMERASE BETA"/>
    <property type="match status" value="1"/>
</dbReference>
<dbReference type="PANTHER" id="PTHR11276">
    <property type="entry name" value="DNA POLYMERASE TYPE-X FAMILY MEMBER"/>
    <property type="match status" value="1"/>
</dbReference>
<dbReference type="Pfam" id="PF14792">
    <property type="entry name" value="DNA_pol_B_palm"/>
    <property type="match status" value="1"/>
</dbReference>
<dbReference type="Pfam" id="PF14791">
    <property type="entry name" value="DNA_pol_B_thumb"/>
    <property type="match status" value="1"/>
</dbReference>
<dbReference type="Pfam" id="PF10391">
    <property type="entry name" value="DNA_pol_lambd_f"/>
    <property type="match status" value="1"/>
</dbReference>
<dbReference type="Pfam" id="PF14716">
    <property type="entry name" value="HHH_8"/>
    <property type="match status" value="1"/>
</dbReference>
<dbReference type="PRINTS" id="PR00869">
    <property type="entry name" value="DNAPOLX"/>
</dbReference>
<dbReference type="PRINTS" id="PR00870">
    <property type="entry name" value="DNAPOLXBETA"/>
</dbReference>
<dbReference type="SMART" id="SM00278">
    <property type="entry name" value="HhH1"/>
    <property type="match status" value="2"/>
</dbReference>
<dbReference type="SMART" id="SM00483">
    <property type="entry name" value="POLXc"/>
    <property type="match status" value="1"/>
</dbReference>
<dbReference type="SUPFAM" id="SSF47802">
    <property type="entry name" value="DNA polymerase beta, N-terminal domain-like"/>
    <property type="match status" value="1"/>
</dbReference>
<dbReference type="SUPFAM" id="SSF81301">
    <property type="entry name" value="Nucleotidyltransferase"/>
    <property type="match status" value="1"/>
</dbReference>
<dbReference type="SUPFAM" id="SSF81585">
    <property type="entry name" value="PsbU/PolX domain-like"/>
    <property type="match status" value="1"/>
</dbReference>
<dbReference type="PROSITE" id="PS00522">
    <property type="entry name" value="DNA_POLYMERASE_X"/>
    <property type="match status" value="1"/>
</dbReference>
<accession>P06766</accession>
<accession>Q4G081</accession>